<sequence>MNLENKNKEIPEEFKKLAEDFSKNGFITTSLDNLINWSRAGSLHWMTFGLACCAVEMMQTAMPRYDLERFGAAPRGSPRQSDVMIVAGTLTNKMAPALRKVYDQMPEPRYVISMGSCANGGGYYHYSYSVVRGCDKIVPVDIYVPGCPPSAEALLYGILQLQKKIRNKGSFER</sequence>
<gene>
    <name evidence="2" type="primary">nuoB</name>
    <name type="ordered locus">SAR11_0884</name>
</gene>
<keyword id="KW-0004">4Fe-4S</keyword>
<keyword id="KW-0997">Cell inner membrane</keyword>
<keyword id="KW-1003">Cell membrane</keyword>
<keyword id="KW-0408">Iron</keyword>
<keyword id="KW-0411">Iron-sulfur</keyword>
<keyword id="KW-0472">Membrane</keyword>
<keyword id="KW-0479">Metal-binding</keyword>
<keyword id="KW-0520">NAD</keyword>
<keyword id="KW-0874">Quinone</keyword>
<keyword id="KW-1185">Reference proteome</keyword>
<keyword id="KW-1278">Translocase</keyword>
<keyword id="KW-0813">Transport</keyword>
<keyword id="KW-0830">Ubiquinone</keyword>
<organism>
    <name type="scientific">Pelagibacter ubique (strain HTCC1062)</name>
    <dbReference type="NCBI Taxonomy" id="335992"/>
    <lineage>
        <taxon>Bacteria</taxon>
        <taxon>Pseudomonadati</taxon>
        <taxon>Pseudomonadota</taxon>
        <taxon>Alphaproteobacteria</taxon>
        <taxon>Candidatus Pelagibacterales</taxon>
        <taxon>Candidatus Pelagibacteraceae</taxon>
        <taxon>Candidatus Pelagibacter</taxon>
    </lineage>
</organism>
<comment type="function">
    <text evidence="1">NDH-1 shuttles electrons from NADH, via FMN and iron-sulfur (Fe-S) centers, to quinones in the respiratory chain. Couples the redox reaction to proton translocation (for every two electrons transferred, four hydrogen ions are translocated across the cytoplasmic membrane), and thus conserves the redox energy in a proton gradient (By similarity).</text>
</comment>
<comment type="catalytic activity">
    <reaction evidence="2">
        <text>a quinone + NADH + 5 H(+)(in) = a quinol + NAD(+) + 4 H(+)(out)</text>
        <dbReference type="Rhea" id="RHEA:57888"/>
        <dbReference type="ChEBI" id="CHEBI:15378"/>
        <dbReference type="ChEBI" id="CHEBI:24646"/>
        <dbReference type="ChEBI" id="CHEBI:57540"/>
        <dbReference type="ChEBI" id="CHEBI:57945"/>
        <dbReference type="ChEBI" id="CHEBI:132124"/>
    </reaction>
</comment>
<comment type="cofactor">
    <cofactor evidence="2">
        <name>[4Fe-4S] cluster</name>
        <dbReference type="ChEBI" id="CHEBI:49883"/>
    </cofactor>
    <text evidence="2">Binds 1 [4Fe-4S] cluster.</text>
</comment>
<comment type="subunit">
    <text evidence="2">NDH-1 is composed of 14 different subunits. Subunits NuoB, C, D, E, F, and G constitute the peripheral sector of the complex.</text>
</comment>
<comment type="subcellular location">
    <subcellularLocation>
        <location evidence="2">Cell inner membrane</location>
        <topology evidence="2">Peripheral membrane protein</topology>
        <orientation evidence="2">Cytoplasmic side</orientation>
    </subcellularLocation>
</comment>
<comment type="similarity">
    <text evidence="2">Belongs to the complex I 20 kDa subunit family.</text>
</comment>
<reference key="1">
    <citation type="journal article" date="2005" name="Science">
        <title>Genome streamlining in a cosmopolitan oceanic bacterium.</title>
        <authorList>
            <person name="Giovannoni S.J."/>
            <person name="Tripp H.J."/>
            <person name="Givan S."/>
            <person name="Podar M."/>
            <person name="Vergin K.L."/>
            <person name="Baptista D."/>
            <person name="Bibbs L."/>
            <person name="Eads J."/>
            <person name="Richardson T.H."/>
            <person name="Noordewier M."/>
            <person name="Rappe M.S."/>
            <person name="Short J.M."/>
            <person name="Carrington J.C."/>
            <person name="Mathur E.J."/>
        </authorList>
    </citation>
    <scope>NUCLEOTIDE SEQUENCE [LARGE SCALE GENOMIC DNA]</scope>
    <source>
        <strain>HTCC1062</strain>
    </source>
</reference>
<protein>
    <recommendedName>
        <fullName evidence="2">NADH-quinone oxidoreductase subunit B</fullName>
        <ecNumber evidence="2">7.1.1.-</ecNumber>
    </recommendedName>
    <alternativeName>
        <fullName evidence="2">NADH dehydrogenase I subunit B</fullName>
    </alternativeName>
    <alternativeName>
        <fullName evidence="2">NDH-1 subunit B</fullName>
    </alternativeName>
</protein>
<evidence type="ECO:0000250" key="1"/>
<evidence type="ECO:0000255" key="2">
    <source>
        <dbReference type="HAMAP-Rule" id="MF_01356"/>
    </source>
</evidence>
<accession>Q4FM90</accession>
<name>NUOB_PELUB</name>
<feature type="chain" id="PRO_0000358442" description="NADH-quinone oxidoreductase subunit B">
    <location>
        <begin position="1"/>
        <end position="173"/>
    </location>
</feature>
<feature type="binding site" evidence="2">
    <location>
        <position position="52"/>
    </location>
    <ligand>
        <name>[4Fe-4S] cluster</name>
        <dbReference type="ChEBI" id="CHEBI:49883"/>
    </ligand>
</feature>
<feature type="binding site" evidence="2">
    <location>
        <position position="53"/>
    </location>
    <ligand>
        <name>[4Fe-4S] cluster</name>
        <dbReference type="ChEBI" id="CHEBI:49883"/>
    </ligand>
</feature>
<feature type="binding site" evidence="2">
    <location>
        <position position="117"/>
    </location>
    <ligand>
        <name>[4Fe-4S] cluster</name>
        <dbReference type="ChEBI" id="CHEBI:49883"/>
    </ligand>
</feature>
<feature type="binding site" evidence="2">
    <location>
        <position position="147"/>
    </location>
    <ligand>
        <name>[4Fe-4S] cluster</name>
        <dbReference type="ChEBI" id="CHEBI:49883"/>
    </ligand>
</feature>
<proteinExistence type="inferred from homology"/>
<dbReference type="EC" id="7.1.1.-" evidence="2"/>
<dbReference type="EMBL" id="CP000084">
    <property type="protein sequence ID" value="AAZ21699.1"/>
    <property type="molecule type" value="Genomic_DNA"/>
</dbReference>
<dbReference type="RefSeq" id="WP_006997035.1">
    <property type="nucleotide sequence ID" value="NC_007205.1"/>
</dbReference>
<dbReference type="SMR" id="Q4FM90"/>
<dbReference type="STRING" id="335992.SAR11_0884"/>
<dbReference type="GeneID" id="66295379"/>
<dbReference type="KEGG" id="pub:SAR11_0884"/>
<dbReference type="eggNOG" id="COG0377">
    <property type="taxonomic scope" value="Bacteria"/>
</dbReference>
<dbReference type="HOGENOM" id="CLU_055737_7_0_5"/>
<dbReference type="OrthoDB" id="9786737at2"/>
<dbReference type="Proteomes" id="UP000002528">
    <property type="component" value="Chromosome"/>
</dbReference>
<dbReference type="GO" id="GO:0005886">
    <property type="term" value="C:plasma membrane"/>
    <property type="evidence" value="ECO:0007669"/>
    <property type="project" value="UniProtKB-SubCell"/>
</dbReference>
<dbReference type="GO" id="GO:0045271">
    <property type="term" value="C:respiratory chain complex I"/>
    <property type="evidence" value="ECO:0007669"/>
    <property type="project" value="TreeGrafter"/>
</dbReference>
<dbReference type="GO" id="GO:0051539">
    <property type="term" value="F:4 iron, 4 sulfur cluster binding"/>
    <property type="evidence" value="ECO:0007669"/>
    <property type="project" value="UniProtKB-KW"/>
</dbReference>
<dbReference type="GO" id="GO:0005506">
    <property type="term" value="F:iron ion binding"/>
    <property type="evidence" value="ECO:0007669"/>
    <property type="project" value="UniProtKB-UniRule"/>
</dbReference>
<dbReference type="GO" id="GO:0008137">
    <property type="term" value="F:NADH dehydrogenase (ubiquinone) activity"/>
    <property type="evidence" value="ECO:0007669"/>
    <property type="project" value="InterPro"/>
</dbReference>
<dbReference type="GO" id="GO:0050136">
    <property type="term" value="F:NADH:ubiquinone reductase (non-electrogenic) activity"/>
    <property type="evidence" value="ECO:0007669"/>
    <property type="project" value="UniProtKB-UniRule"/>
</dbReference>
<dbReference type="GO" id="GO:0048038">
    <property type="term" value="F:quinone binding"/>
    <property type="evidence" value="ECO:0007669"/>
    <property type="project" value="UniProtKB-KW"/>
</dbReference>
<dbReference type="GO" id="GO:0009060">
    <property type="term" value="P:aerobic respiration"/>
    <property type="evidence" value="ECO:0007669"/>
    <property type="project" value="TreeGrafter"/>
</dbReference>
<dbReference type="GO" id="GO:0015990">
    <property type="term" value="P:electron transport coupled proton transport"/>
    <property type="evidence" value="ECO:0007669"/>
    <property type="project" value="TreeGrafter"/>
</dbReference>
<dbReference type="FunFam" id="3.40.50.12280:FF:000001">
    <property type="entry name" value="NADH-quinone oxidoreductase subunit B 2"/>
    <property type="match status" value="1"/>
</dbReference>
<dbReference type="Gene3D" id="3.40.50.12280">
    <property type="match status" value="1"/>
</dbReference>
<dbReference type="HAMAP" id="MF_01356">
    <property type="entry name" value="NDH1_NuoB"/>
    <property type="match status" value="1"/>
</dbReference>
<dbReference type="InterPro" id="IPR006137">
    <property type="entry name" value="NADH_UbQ_OxRdtase-like_20kDa"/>
</dbReference>
<dbReference type="InterPro" id="IPR006138">
    <property type="entry name" value="NADH_UQ_OxRdtase_20Kd_su"/>
</dbReference>
<dbReference type="NCBIfam" id="TIGR01957">
    <property type="entry name" value="nuoB_fam"/>
    <property type="match status" value="1"/>
</dbReference>
<dbReference type="NCBIfam" id="NF005012">
    <property type="entry name" value="PRK06411.1"/>
    <property type="match status" value="1"/>
</dbReference>
<dbReference type="PANTHER" id="PTHR11995">
    <property type="entry name" value="NADH DEHYDROGENASE"/>
    <property type="match status" value="1"/>
</dbReference>
<dbReference type="PANTHER" id="PTHR11995:SF14">
    <property type="entry name" value="NADH DEHYDROGENASE [UBIQUINONE] IRON-SULFUR PROTEIN 7, MITOCHONDRIAL"/>
    <property type="match status" value="1"/>
</dbReference>
<dbReference type="Pfam" id="PF01058">
    <property type="entry name" value="Oxidored_q6"/>
    <property type="match status" value="1"/>
</dbReference>
<dbReference type="SUPFAM" id="SSF56770">
    <property type="entry name" value="HydA/Nqo6-like"/>
    <property type="match status" value="1"/>
</dbReference>
<dbReference type="PROSITE" id="PS01150">
    <property type="entry name" value="COMPLEX1_20K"/>
    <property type="match status" value="1"/>
</dbReference>